<gene>
    <name evidence="1" type="primary">gatA</name>
    <name type="ordered locus">CTA_0004</name>
</gene>
<feature type="chain" id="PRO_0000241089" description="Glutamyl-tRNA(Gln) amidotransferase subunit A">
    <location>
        <begin position="1"/>
        <end position="491"/>
    </location>
</feature>
<feature type="active site" description="Charge relay system" evidence="1">
    <location>
        <position position="77"/>
    </location>
</feature>
<feature type="active site" description="Charge relay system" evidence="1">
    <location>
        <position position="152"/>
    </location>
</feature>
<feature type="active site" description="Acyl-ester intermediate" evidence="1">
    <location>
        <position position="176"/>
    </location>
</feature>
<evidence type="ECO:0000255" key="1">
    <source>
        <dbReference type="HAMAP-Rule" id="MF_00120"/>
    </source>
</evidence>
<sequence>MYRKSALELRDAVVNRELSVTAITEYFYHRIESHDEQIGAFLSLCKERALLRASRIDDKLAKGDPIGLLAGIPIGVKDNIHITGVKTTCASKMLENFVAPFDSTVVRRIEMEDGILLGKLNMDEFAMGSTTRYSAFHPTNNPWDLERVPGGSSGGSAAAVSARFCPIALGSDTGGSIRQPAAFCGVVGFKPSYGAVSRYGLVAFGSSLDQIGPLTTVVEDVALAMDAFAGRDPKDSTTRDFFKGTFSQALSLEVPKLIGVPRGFLDGLQEDCKENFFEALAVMEREGSRIIDVDLSVLKHAVPVYYIVASAEAATNLARFDGVRYGHRCAQADNMHEMYARSRKEGFGKEVTRRILLGNYVLSAERQNIFYKKGMAVRARLIDAFQAAFERCDVIAMPVCATPAIRDQDVLDPVSLYLQDVYTVAVNLAYLPAISVPSGLSKEGLPLGVQFIGERGSDQQICQVGYSFQEHSQIKQLYPKAVNGLFDGGIE</sequence>
<reference key="1">
    <citation type="journal article" date="2005" name="Infect. Immun.">
        <title>Comparative genomic analysis of Chlamydia trachomatis oculotropic and genitotropic strains.</title>
        <authorList>
            <person name="Carlson J.H."/>
            <person name="Porcella S.F."/>
            <person name="McClarty G."/>
            <person name="Caldwell H.D."/>
        </authorList>
    </citation>
    <scope>NUCLEOTIDE SEQUENCE [LARGE SCALE GENOMIC DNA]</scope>
    <source>
        <strain>ATCC VR-571B / DSM 19440 / HAR-13</strain>
    </source>
</reference>
<dbReference type="EC" id="6.3.5.7" evidence="1"/>
<dbReference type="EMBL" id="CP000051">
    <property type="protein sequence ID" value="AAX50253.1"/>
    <property type="molecule type" value="Genomic_DNA"/>
</dbReference>
<dbReference type="RefSeq" id="WP_009871349.1">
    <property type="nucleotide sequence ID" value="NC_007429.1"/>
</dbReference>
<dbReference type="SMR" id="Q3KN19"/>
<dbReference type="KEGG" id="cta:CTA_0004"/>
<dbReference type="HOGENOM" id="CLU_009600_0_3_0"/>
<dbReference type="Proteomes" id="UP000002532">
    <property type="component" value="Chromosome"/>
</dbReference>
<dbReference type="GO" id="GO:0030956">
    <property type="term" value="C:glutamyl-tRNA(Gln) amidotransferase complex"/>
    <property type="evidence" value="ECO:0007669"/>
    <property type="project" value="InterPro"/>
</dbReference>
<dbReference type="GO" id="GO:0005524">
    <property type="term" value="F:ATP binding"/>
    <property type="evidence" value="ECO:0007669"/>
    <property type="project" value="UniProtKB-KW"/>
</dbReference>
<dbReference type="GO" id="GO:0050567">
    <property type="term" value="F:glutaminyl-tRNA synthase (glutamine-hydrolyzing) activity"/>
    <property type="evidence" value="ECO:0007669"/>
    <property type="project" value="UniProtKB-UniRule"/>
</dbReference>
<dbReference type="GO" id="GO:0006412">
    <property type="term" value="P:translation"/>
    <property type="evidence" value="ECO:0007669"/>
    <property type="project" value="UniProtKB-UniRule"/>
</dbReference>
<dbReference type="Gene3D" id="3.90.1300.10">
    <property type="entry name" value="Amidase signature (AS) domain"/>
    <property type="match status" value="1"/>
</dbReference>
<dbReference type="HAMAP" id="MF_00120">
    <property type="entry name" value="GatA"/>
    <property type="match status" value="1"/>
</dbReference>
<dbReference type="InterPro" id="IPR000120">
    <property type="entry name" value="Amidase"/>
</dbReference>
<dbReference type="InterPro" id="IPR020556">
    <property type="entry name" value="Amidase_CS"/>
</dbReference>
<dbReference type="InterPro" id="IPR023631">
    <property type="entry name" value="Amidase_dom"/>
</dbReference>
<dbReference type="InterPro" id="IPR036928">
    <property type="entry name" value="AS_sf"/>
</dbReference>
<dbReference type="InterPro" id="IPR004412">
    <property type="entry name" value="GatA"/>
</dbReference>
<dbReference type="NCBIfam" id="TIGR00132">
    <property type="entry name" value="gatA"/>
    <property type="match status" value="1"/>
</dbReference>
<dbReference type="PANTHER" id="PTHR11895:SF151">
    <property type="entry name" value="GLUTAMYL-TRNA(GLN) AMIDOTRANSFERASE SUBUNIT A"/>
    <property type="match status" value="1"/>
</dbReference>
<dbReference type="PANTHER" id="PTHR11895">
    <property type="entry name" value="TRANSAMIDASE"/>
    <property type="match status" value="1"/>
</dbReference>
<dbReference type="Pfam" id="PF01425">
    <property type="entry name" value="Amidase"/>
    <property type="match status" value="1"/>
</dbReference>
<dbReference type="SUPFAM" id="SSF75304">
    <property type="entry name" value="Amidase signature (AS) enzymes"/>
    <property type="match status" value="1"/>
</dbReference>
<dbReference type="PROSITE" id="PS00571">
    <property type="entry name" value="AMIDASES"/>
    <property type="match status" value="1"/>
</dbReference>
<organism>
    <name type="scientific">Chlamydia trachomatis serovar A (strain ATCC VR-571B / DSM 19440 / HAR-13)</name>
    <dbReference type="NCBI Taxonomy" id="315277"/>
    <lineage>
        <taxon>Bacteria</taxon>
        <taxon>Pseudomonadati</taxon>
        <taxon>Chlamydiota</taxon>
        <taxon>Chlamydiia</taxon>
        <taxon>Chlamydiales</taxon>
        <taxon>Chlamydiaceae</taxon>
        <taxon>Chlamydia/Chlamydophila group</taxon>
        <taxon>Chlamydia</taxon>
    </lineage>
</organism>
<name>GATA_CHLTA</name>
<proteinExistence type="inferred from homology"/>
<accession>Q3KN19</accession>
<protein>
    <recommendedName>
        <fullName evidence="1">Glutamyl-tRNA(Gln) amidotransferase subunit A</fullName>
        <shortName evidence="1">Glu-ADT subunit A</shortName>
        <ecNumber evidence="1">6.3.5.7</ecNumber>
    </recommendedName>
</protein>
<comment type="function">
    <text evidence="1">Allows the formation of correctly charged Gln-tRNA(Gln) through the transamidation of misacylated Glu-tRNA(Gln) in organisms which lack glutaminyl-tRNA synthetase. The reaction takes place in the presence of glutamine and ATP through an activated gamma-phospho-Glu-tRNA(Gln).</text>
</comment>
<comment type="catalytic activity">
    <reaction evidence="1">
        <text>L-glutamyl-tRNA(Gln) + L-glutamine + ATP + H2O = L-glutaminyl-tRNA(Gln) + L-glutamate + ADP + phosphate + H(+)</text>
        <dbReference type="Rhea" id="RHEA:17521"/>
        <dbReference type="Rhea" id="RHEA-COMP:9681"/>
        <dbReference type="Rhea" id="RHEA-COMP:9684"/>
        <dbReference type="ChEBI" id="CHEBI:15377"/>
        <dbReference type="ChEBI" id="CHEBI:15378"/>
        <dbReference type="ChEBI" id="CHEBI:29985"/>
        <dbReference type="ChEBI" id="CHEBI:30616"/>
        <dbReference type="ChEBI" id="CHEBI:43474"/>
        <dbReference type="ChEBI" id="CHEBI:58359"/>
        <dbReference type="ChEBI" id="CHEBI:78520"/>
        <dbReference type="ChEBI" id="CHEBI:78521"/>
        <dbReference type="ChEBI" id="CHEBI:456216"/>
        <dbReference type="EC" id="6.3.5.7"/>
    </reaction>
</comment>
<comment type="subunit">
    <text evidence="1">Heterotrimer of A, B and C subunits.</text>
</comment>
<comment type="similarity">
    <text evidence="1">Belongs to the amidase family. GatA subfamily.</text>
</comment>
<keyword id="KW-0067">ATP-binding</keyword>
<keyword id="KW-0436">Ligase</keyword>
<keyword id="KW-0547">Nucleotide-binding</keyword>
<keyword id="KW-0648">Protein biosynthesis</keyword>